<comment type="function">
    <text evidence="1">Autophagy-specific protein that functions in response to autophagy-inducing signals as a scaffold to recruit other ATG proteins to organize pre-autophagosomal structure (PAS) formation. Modulates the timing and magnitude of the autophagy response, such as the size of the sequestering vesicles. Plays particularly a role in pexophagy and nucleophagy (By similarity).</text>
</comment>
<comment type="subcellular location">
    <subcellularLocation>
        <location evidence="1">Cytoplasm</location>
    </subcellularLocation>
    <subcellularLocation>
        <location evidence="1">Preautophagosomal structure membrane</location>
        <topology evidence="1">Peripheral membrane protein</topology>
    </subcellularLocation>
</comment>
<comment type="similarity">
    <text evidence="4">Belongs to the ATG17 family.</text>
</comment>
<accession>A1DHW5</accession>
<evidence type="ECO:0000250" key="1"/>
<evidence type="ECO:0000255" key="2"/>
<evidence type="ECO:0000256" key="3">
    <source>
        <dbReference type="SAM" id="MobiDB-lite"/>
    </source>
</evidence>
<evidence type="ECO:0000305" key="4"/>
<feature type="chain" id="PRO_0000317984" description="Autophagy-related protein 17">
    <location>
        <begin position="1"/>
        <end position="550"/>
    </location>
</feature>
<feature type="region of interest" description="Disordered" evidence="3">
    <location>
        <begin position="1"/>
        <end position="24"/>
    </location>
</feature>
<feature type="region of interest" description="Disordered" evidence="3">
    <location>
        <begin position="204"/>
        <end position="226"/>
    </location>
</feature>
<feature type="coiled-coil region" evidence="2">
    <location>
        <begin position="317"/>
        <end position="354"/>
    </location>
</feature>
<feature type="coiled-coil region" evidence="2">
    <location>
        <begin position="427"/>
        <end position="451"/>
    </location>
</feature>
<name>ATG17_NEOFI</name>
<dbReference type="EMBL" id="DS027696">
    <property type="protein sequence ID" value="EAW18972.1"/>
    <property type="molecule type" value="Genomic_DNA"/>
</dbReference>
<dbReference type="RefSeq" id="XP_001260869.1">
    <property type="nucleotide sequence ID" value="XM_001260868.1"/>
</dbReference>
<dbReference type="SMR" id="A1DHW5"/>
<dbReference type="STRING" id="331117.A1DHW5"/>
<dbReference type="EnsemblFungi" id="EAW18972">
    <property type="protein sequence ID" value="EAW18972"/>
    <property type="gene ID" value="NFIA_089290"/>
</dbReference>
<dbReference type="GeneID" id="4587427"/>
<dbReference type="KEGG" id="nfi:NFIA_089290"/>
<dbReference type="VEuPathDB" id="FungiDB:NFIA_089290"/>
<dbReference type="eggNOG" id="ENOG502RYHP">
    <property type="taxonomic scope" value="Eukaryota"/>
</dbReference>
<dbReference type="HOGENOM" id="CLU_028356_0_0_1"/>
<dbReference type="OMA" id="THVWRAN"/>
<dbReference type="OrthoDB" id="1937984at2759"/>
<dbReference type="Proteomes" id="UP000006702">
    <property type="component" value="Unassembled WGS sequence"/>
</dbReference>
<dbReference type="GO" id="GO:1990316">
    <property type="term" value="C:Atg1/ULK1 kinase complex"/>
    <property type="evidence" value="ECO:0007669"/>
    <property type="project" value="TreeGrafter"/>
</dbReference>
<dbReference type="GO" id="GO:0034045">
    <property type="term" value="C:phagophore assembly site membrane"/>
    <property type="evidence" value="ECO:0007669"/>
    <property type="project" value="UniProtKB-SubCell"/>
</dbReference>
<dbReference type="GO" id="GO:0060090">
    <property type="term" value="F:molecular adaptor activity"/>
    <property type="evidence" value="ECO:0007669"/>
    <property type="project" value="TreeGrafter"/>
</dbReference>
<dbReference type="GO" id="GO:0030295">
    <property type="term" value="F:protein kinase activator activity"/>
    <property type="evidence" value="ECO:0007669"/>
    <property type="project" value="TreeGrafter"/>
</dbReference>
<dbReference type="GO" id="GO:0000045">
    <property type="term" value="P:autophagosome assembly"/>
    <property type="evidence" value="ECO:0007669"/>
    <property type="project" value="TreeGrafter"/>
</dbReference>
<dbReference type="GO" id="GO:0000422">
    <property type="term" value="P:autophagy of mitochondrion"/>
    <property type="evidence" value="ECO:0007669"/>
    <property type="project" value="TreeGrafter"/>
</dbReference>
<dbReference type="GO" id="GO:0034727">
    <property type="term" value="P:piecemeal microautophagy of the nucleus"/>
    <property type="evidence" value="ECO:0007669"/>
    <property type="project" value="TreeGrafter"/>
</dbReference>
<dbReference type="InterPro" id="IPR007240">
    <property type="entry name" value="Atg17"/>
</dbReference>
<dbReference type="InterPro" id="IPR045326">
    <property type="entry name" value="ATG17-like_dom"/>
</dbReference>
<dbReference type="PANTHER" id="PTHR28005">
    <property type="entry name" value="AUTOPHAGY-RELATED PROTEIN 17"/>
    <property type="match status" value="1"/>
</dbReference>
<dbReference type="PANTHER" id="PTHR28005:SF1">
    <property type="entry name" value="AUTOPHAGY-RELATED PROTEIN 17"/>
    <property type="match status" value="1"/>
</dbReference>
<dbReference type="Pfam" id="PF04108">
    <property type="entry name" value="ATG17_like"/>
    <property type="match status" value="1"/>
</dbReference>
<organism>
    <name type="scientific">Neosartorya fischeri (strain ATCC 1020 / DSM 3700 / CBS 544.65 / FGSC A1164 / JCM 1740 / NRRL 181 / WB 181)</name>
    <name type="common">Aspergillus fischerianus</name>
    <dbReference type="NCBI Taxonomy" id="331117"/>
    <lineage>
        <taxon>Eukaryota</taxon>
        <taxon>Fungi</taxon>
        <taxon>Dikarya</taxon>
        <taxon>Ascomycota</taxon>
        <taxon>Pezizomycotina</taxon>
        <taxon>Eurotiomycetes</taxon>
        <taxon>Eurotiomycetidae</taxon>
        <taxon>Eurotiales</taxon>
        <taxon>Aspergillaceae</taxon>
        <taxon>Aspergillus</taxon>
        <taxon>Aspergillus subgen. Fumigati</taxon>
    </lineage>
</organism>
<reference key="1">
    <citation type="journal article" date="2008" name="PLoS Genet.">
        <title>Genomic islands in the pathogenic filamentous fungus Aspergillus fumigatus.</title>
        <authorList>
            <person name="Fedorova N.D."/>
            <person name="Khaldi N."/>
            <person name="Joardar V.S."/>
            <person name="Maiti R."/>
            <person name="Amedeo P."/>
            <person name="Anderson M.J."/>
            <person name="Crabtree J."/>
            <person name="Silva J.C."/>
            <person name="Badger J.H."/>
            <person name="Albarraq A."/>
            <person name="Angiuoli S."/>
            <person name="Bussey H."/>
            <person name="Bowyer P."/>
            <person name="Cotty P.J."/>
            <person name="Dyer P.S."/>
            <person name="Egan A."/>
            <person name="Galens K."/>
            <person name="Fraser-Liggett C.M."/>
            <person name="Haas B.J."/>
            <person name="Inman J.M."/>
            <person name="Kent R."/>
            <person name="Lemieux S."/>
            <person name="Malavazi I."/>
            <person name="Orvis J."/>
            <person name="Roemer T."/>
            <person name="Ronning C.M."/>
            <person name="Sundaram J.P."/>
            <person name="Sutton G."/>
            <person name="Turner G."/>
            <person name="Venter J.C."/>
            <person name="White O.R."/>
            <person name="Whitty B.R."/>
            <person name="Youngman P."/>
            <person name="Wolfe K.H."/>
            <person name="Goldman G.H."/>
            <person name="Wortman J.R."/>
            <person name="Jiang B."/>
            <person name="Denning D.W."/>
            <person name="Nierman W.C."/>
        </authorList>
    </citation>
    <scope>NUCLEOTIDE SEQUENCE [LARGE SCALE GENOMIC DNA]</scope>
    <source>
        <strain>ATCC 1020 / DSM 3700 / CBS 544.65 / FGSC A1164 / JCM 1740 / NRRL 181 / WB 181</strain>
    </source>
</reference>
<gene>
    <name type="primary">atg17</name>
    <name type="ORF">NFIA_089290</name>
</gene>
<keyword id="KW-0072">Autophagy</keyword>
<keyword id="KW-0175">Coiled coil</keyword>
<keyword id="KW-0963">Cytoplasm</keyword>
<keyword id="KW-0472">Membrane</keyword>
<keyword id="KW-1185">Reference proteome</keyword>
<sequence length="550" mass="60647">MSSSESSSASGGGRPDAGQPPSEEQAMPRLDTLISHLVAAKRSLSSINHVWRANEIVTAARAALEECVVVSARTGFLRRGLNNQLRLLYSVRTEVEEISLRGRSEFAAVLKDLDDADTRLRRTLELLRETIVHPAFRPEGEDPKSLHDFVDERGVEELHAALKSSIDRTTAAQAQLDSSNHAFDDELLSIKEALGTYRTAAKLASSRSSSSASSSSASNSSLPSMSTMPSMLHSLEMHAQEMANLLESLVRHFDLCVTAVKHTEGGGAAAKSITGDMPVGVPVSGRMGSNIEDINDNLNAPLDPLSNSEYQEMVNVLFKDAAEAEDVVMEIQDRISEMESVLENVLAQRDALRSIYNATTDIYQHLSSLGSTRLPGYIAQAHNFTQVWHEENDRISGGLADLSDLNSLYDGFLDAYDGLIVEVARRKHVRQRVEKVLRDARHKLDQLYEEDVTARETFRVEKGDYLPSDIWPEIGREPMRIEFRRISGANVQAVNLQRPHEQEAITGEQEAANRLAPVESSDGDEIIPDLPRDLVEQAFARLKARVKGAT</sequence>
<protein>
    <recommendedName>
        <fullName>Autophagy-related protein 17</fullName>
    </recommendedName>
</protein>
<proteinExistence type="inferred from homology"/>